<proteinExistence type="evidence at protein level"/>
<sequence length="49" mass="5592">YLDHGLGAPAPYVDPLEPKREVCELNPDCDELADQMGFQEAYRRFYGTT</sequence>
<gene>
    <name evidence="2" type="primary">BGLAP</name>
</gene>
<protein>
    <recommendedName>
        <fullName evidence="8">Osteocalcin</fullName>
    </recommendedName>
    <alternativeName>
        <fullName evidence="2">Bone Gla protein</fullName>
        <shortName evidence="2">BGP</shortName>
    </alternativeName>
    <alternativeName>
        <fullName evidence="2">Gamma-carboxyglutamic acid-containing protein</fullName>
    </alternativeName>
</protein>
<reference evidence="9" key="1">
    <citation type="journal article" date="2007" name="Geochim. Cosmochim. Acta">
        <title>Investigation of the protein osteocalcin of Camelops hesternus: Sequence, structure and phylogenetic implications.</title>
        <authorList>
            <person name="Humpula J.F."/>
            <person name="Ostrom P.H."/>
            <person name="Gandhi H."/>
            <person name="Strahler J.R."/>
            <person name="Walker A.K."/>
            <person name="Stafford T.W. Jr."/>
            <person name="Smith J.J."/>
            <person name="Voorhies M.R."/>
            <person name="Corner R.G."/>
            <person name="Andrews P.C."/>
        </authorList>
    </citation>
    <scope>PROTEIN SEQUENCE</scope>
    <scope>HYDROXYLATION AT PRO-9</scope>
    <scope>DISULFIDE BOND</scope>
    <source>
        <tissue evidence="7">Bone</tissue>
    </source>
</reference>
<accession>P86315</accession>
<evidence type="ECO:0000250" key="1">
    <source>
        <dbReference type="UniProtKB" id="P02818"/>
    </source>
</evidence>
<evidence type="ECO:0000250" key="2">
    <source>
        <dbReference type="UniProtKB" id="P02820"/>
    </source>
</evidence>
<evidence type="ECO:0000250" key="3">
    <source>
        <dbReference type="UniProtKB" id="P83489"/>
    </source>
</evidence>
<evidence type="ECO:0000250" key="4">
    <source>
        <dbReference type="UniProtKB" id="P86546"/>
    </source>
</evidence>
<evidence type="ECO:0000255" key="5"/>
<evidence type="ECO:0000255" key="6">
    <source>
        <dbReference type="PROSITE-ProRule" id="PRU00463"/>
    </source>
</evidence>
<evidence type="ECO:0000269" key="7">
    <source ref="1"/>
</evidence>
<evidence type="ECO:0000303" key="8">
    <source ref="1"/>
</evidence>
<evidence type="ECO:0000305" key="9"/>
<keyword id="KW-0091">Biomineralization</keyword>
<keyword id="KW-0106">Calcium</keyword>
<keyword id="KW-0903">Direct protein sequencing</keyword>
<keyword id="KW-1015">Disulfide bond</keyword>
<keyword id="KW-0301">Gamma-carboxyglutamic acid</keyword>
<keyword id="KW-0372">Hormone</keyword>
<keyword id="KW-0379">Hydroxylation</keyword>
<keyword id="KW-0479">Metal-binding</keyword>
<keyword id="KW-0964">Secreted</keyword>
<feature type="chain" id="PRO_0000378906" description="Osteocalcin">
    <location>
        <begin position="1"/>
        <end position="49"/>
    </location>
</feature>
<feature type="domain" description="Gla" evidence="6">
    <location>
        <begin position="1"/>
        <end position="47"/>
    </location>
</feature>
<feature type="binding site" evidence="2">
    <location>
        <position position="17"/>
    </location>
    <ligand>
        <name>Ca(2+)</name>
        <dbReference type="ChEBI" id="CHEBI:29108"/>
        <label>1</label>
    </ligand>
</feature>
<feature type="binding site" evidence="2">
    <location>
        <position position="21"/>
    </location>
    <ligand>
        <name>Ca(2+)</name>
        <dbReference type="ChEBI" id="CHEBI:29108"/>
        <label>2</label>
    </ligand>
</feature>
<feature type="binding site" evidence="2">
    <location>
        <position position="24"/>
    </location>
    <ligand>
        <name>Ca(2+)</name>
        <dbReference type="ChEBI" id="CHEBI:29108"/>
        <label>2</label>
    </ligand>
</feature>
<feature type="binding site" evidence="2">
    <location>
        <position position="24"/>
    </location>
    <ligand>
        <name>Ca(2+)</name>
        <dbReference type="ChEBI" id="CHEBI:29108"/>
        <label>3</label>
    </ligand>
</feature>
<feature type="binding site" evidence="2">
    <location>
        <position position="30"/>
    </location>
    <ligand>
        <name>Ca(2+)</name>
        <dbReference type="ChEBI" id="CHEBI:29108"/>
        <label>3</label>
    </ligand>
</feature>
<feature type="modified residue" description="4-hydroxyproline" evidence="7">
    <location>
        <position position="9"/>
    </location>
</feature>
<feature type="modified residue" description="4-carboxyglutamate" evidence="1 6">
    <location>
        <position position="17"/>
    </location>
</feature>
<feature type="modified residue" description="4-carboxyglutamate" evidence="3 6">
    <location>
        <position position="21"/>
    </location>
</feature>
<feature type="modified residue" description="4-carboxyglutamate" evidence="3 6">
    <location>
        <position position="24"/>
    </location>
</feature>
<feature type="disulfide bond" evidence="6 7">
    <location>
        <begin position="23"/>
        <end position="29"/>
    </location>
</feature>
<dbReference type="SMR" id="P86315"/>
<dbReference type="GO" id="GO:0005737">
    <property type="term" value="C:cytoplasm"/>
    <property type="evidence" value="ECO:0000250"/>
    <property type="project" value="UniProtKB"/>
</dbReference>
<dbReference type="GO" id="GO:0005576">
    <property type="term" value="C:extracellular region"/>
    <property type="evidence" value="ECO:0007669"/>
    <property type="project" value="UniProtKB-SubCell"/>
</dbReference>
<dbReference type="GO" id="GO:0005509">
    <property type="term" value="F:calcium ion binding"/>
    <property type="evidence" value="ECO:0007669"/>
    <property type="project" value="InterPro"/>
</dbReference>
<dbReference type="GO" id="GO:0005179">
    <property type="term" value="F:hormone activity"/>
    <property type="evidence" value="ECO:0000250"/>
    <property type="project" value="UniProtKB"/>
</dbReference>
<dbReference type="GO" id="GO:0046848">
    <property type="term" value="F:hydroxyapatite binding"/>
    <property type="evidence" value="ECO:0007669"/>
    <property type="project" value="TreeGrafter"/>
</dbReference>
<dbReference type="GO" id="GO:0008147">
    <property type="term" value="F:structural constituent of bone"/>
    <property type="evidence" value="ECO:0000250"/>
    <property type="project" value="UniProtKB"/>
</dbReference>
<dbReference type="GO" id="GO:0031214">
    <property type="term" value="P:biomineral tissue development"/>
    <property type="evidence" value="ECO:0007669"/>
    <property type="project" value="UniProtKB-KW"/>
</dbReference>
<dbReference type="GO" id="GO:0060348">
    <property type="term" value="P:bone development"/>
    <property type="evidence" value="ECO:0007669"/>
    <property type="project" value="InterPro"/>
</dbReference>
<dbReference type="GO" id="GO:0007420">
    <property type="term" value="P:brain development"/>
    <property type="evidence" value="ECO:0000250"/>
    <property type="project" value="UniProtKB"/>
</dbReference>
<dbReference type="GO" id="GO:0032869">
    <property type="term" value="P:cellular response to insulin stimulus"/>
    <property type="evidence" value="ECO:0000250"/>
    <property type="project" value="UniProtKB"/>
</dbReference>
<dbReference type="GO" id="GO:0050890">
    <property type="term" value="P:cognition"/>
    <property type="evidence" value="ECO:0000250"/>
    <property type="project" value="UniProtKB"/>
</dbReference>
<dbReference type="GO" id="GO:0042593">
    <property type="term" value="P:glucose homeostasis"/>
    <property type="evidence" value="ECO:0000250"/>
    <property type="project" value="UniProtKB"/>
</dbReference>
<dbReference type="GO" id="GO:0007611">
    <property type="term" value="P:learning or memory"/>
    <property type="evidence" value="ECO:0000250"/>
    <property type="project" value="UniProtKB"/>
</dbReference>
<dbReference type="GO" id="GO:1903011">
    <property type="term" value="P:negative regulation of bone development"/>
    <property type="evidence" value="ECO:0000250"/>
    <property type="project" value="UniProtKB"/>
</dbReference>
<dbReference type="GO" id="GO:0001649">
    <property type="term" value="P:osteoblast differentiation"/>
    <property type="evidence" value="ECO:0007669"/>
    <property type="project" value="TreeGrafter"/>
</dbReference>
<dbReference type="GO" id="GO:0001956">
    <property type="term" value="P:positive regulation of neurotransmitter secretion"/>
    <property type="evidence" value="ECO:0000250"/>
    <property type="project" value="UniProtKB"/>
</dbReference>
<dbReference type="GO" id="GO:0030500">
    <property type="term" value="P:regulation of bone mineralization"/>
    <property type="evidence" value="ECO:0007669"/>
    <property type="project" value="InterPro"/>
</dbReference>
<dbReference type="GO" id="GO:1900076">
    <property type="term" value="P:regulation of cellular response to insulin stimulus"/>
    <property type="evidence" value="ECO:0007669"/>
    <property type="project" value="InterPro"/>
</dbReference>
<dbReference type="GO" id="GO:2000224">
    <property type="term" value="P:regulation of testosterone biosynthetic process"/>
    <property type="evidence" value="ECO:0000250"/>
    <property type="project" value="UniProtKB"/>
</dbReference>
<dbReference type="GO" id="GO:0032571">
    <property type="term" value="P:response to vitamin K"/>
    <property type="evidence" value="ECO:0007669"/>
    <property type="project" value="InterPro"/>
</dbReference>
<dbReference type="GO" id="GO:0044342">
    <property type="term" value="P:type B pancreatic cell proliferation"/>
    <property type="evidence" value="ECO:0000250"/>
    <property type="project" value="UniProtKB"/>
</dbReference>
<dbReference type="InterPro" id="IPR035972">
    <property type="entry name" value="GLA-like_dom_SF"/>
</dbReference>
<dbReference type="InterPro" id="IPR000294">
    <property type="entry name" value="GLA_domain"/>
</dbReference>
<dbReference type="InterPro" id="IPR039176">
    <property type="entry name" value="Osteocalcin"/>
</dbReference>
<dbReference type="InterPro" id="IPR002384">
    <property type="entry name" value="Osteocalcin/MGP"/>
</dbReference>
<dbReference type="PANTHER" id="PTHR14235">
    <property type="entry name" value="OSTEOCALCIN"/>
    <property type="match status" value="1"/>
</dbReference>
<dbReference type="PANTHER" id="PTHR14235:SF0">
    <property type="entry name" value="OSTEOCALCIN"/>
    <property type="match status" value="1"/>
</dbReference>
<dbReference type="PRINTS" id="PR00002">
    <property type="entry name" value="GLABONE"/>
</dbReference>
<dbReference type="SMART" id="SM00069">
    <property type="entry name" value="GLA"/>
    <property type="match status" value="1"/>
</dbReference>
<dbReference type="SUPFAM" id="SSF57630">
    <property type="entry name" value="GLA-domain"/>
    <property type="match status" value="1"/>
</dbReference>
<dbReference type="PROSITE" id="PS00011">
    <property type="entry name" value="GLA_1"/>
    <property type="match status" value="1"/>
</dbReference>
<dbReference type="PROSITE" id="PS50998">
    <property type="entry name" value="GLA_2"/>
    <property type="match status" value="1"/>
</dbReference>
<organism>
    <name type="scientific">Lama guanicoe</name>
    <name type="common">Guanaco</name>
    <name type="synonym">Lama glama guanicoe</name>
    <dbReference type="NCBI Taxonomy" id="9840"/>
    <lineage>
        <taxon>Eukaryota</taxon>
        <taxon>Metazoa</taxon>
        <taxon>Chordata</taxon>
        <taxon>Craniata</taxon>
        <taxon>Vertebrata</taxon>
        <taxon>Euteleostomi</taxon>
        <taxon>Mammalia</taxon>
        <taxon>Eutheria</taxon>
        <taxon>Laurasiatheria</taxon>
        <taxon>Artiodactyla</taxon>
        <taxon>Tylopoda</taxon>
        <taxon>Camelidae</taxon>
        <taxon>Lama</taxon>
    </lineage>
</organism>
<comment type="function">
    <text evidence="4">The carboxylated form is one of the main organic components of the bone matrix, which constitutes 1-2% of the total bone protein: it acts as a negative regulator of bone formation and is required to limit bone formation without impairing bone resorption or mineralization. The carboxylated form binds strongly to apatite and calcium.</text>
</comment>
<comment type="function">
    <text evidence="4">The uncarboxylated form acts as a hormone secreted by osteoblasts, which regulates different cellular processes, such as energy metabolism, male fertility and brain development. Regulates of energy metabolism by acting as a hormone favoring pancreatic beta-cell proliferation, insulin secretion and sensitivity and energy expenditure. Uncarboxylated osteocalcin hormone also promotes testosterone production in the testes: acts as a ligand for G protein-coupled receptor GPRC6A at the surface of Leydig cells, initiating a signaling response that promotes the expression of enzymes required for testosterone synthesis in a CREB-dependent manner. Also acts as a regulator of brain development: osteocalcin hormone crosses the blood-brain barrier and acts as a ligand for GPR158 on neurons, initiating a signaling response that prevents neuronal apoptosis in the hippocampus, favors the synthesis of all monoamine neurotransmitters and inhibits that of gamma-aminobutyric acid (GABA). Osteocalcin also crosses the placenta during pregnancy and maternal osteocalcin is required for fetal brain development.</text>
</comment>
<comment type="subcellular location">
    <subcellularLocation>
        <location evidence="2">Secreted</location>
    </subcellularLocation>
</comment>
<comment type="PTM">
    <text evidence="2">Gamma-carboxyglutamic acid residues are formed by vitamin K dependent carboxylation. These residues are essential for the binding of calcium (By similarity).</text>
</comment>
<comment type="similarity">
    <text evidence="5">Belongs to the osteocalcin/matrix Gla protein family.</text>
</comment>
<name>OSTCN_LAMGU</name>